<comment type="subcellular location">
    <subcellularLocation>
        <location evidence="1">Spore core</location>
    </subcellularLocation>
</comment>
<comment type="induction">
    <text evidence="1">Expressed only in the forespore compartment of sporulating cells.</text>
</comment>
<comment type="similarity">
    <text evidence="1">Belongs to the SspN family.</text>
</comment>
<reference key="1">
    <citation type="journal article" date="2007" name="Proc. Natl. Acad. Sci. U.S.A.">
        <title>Genome and proteome of long-chain alkane degrading Geobacillus thermodenitrificans NG80-2 isolated from a deep-subsurface oil reservoir.</title>
        <authorList>
            <person name="Feng L."/>
            <person name="Wang W."/>
            <person name="Cheng J."/>
            <person name="Ren Y."/>
            <person name="Zhao G."/>
            <person name="Gao C."/>
            <person name="Tang Y."/>
            <person name="Liu X."/>
            <person name="Han W."/>
            <person name="Peng X."/>
            <person name="Liu R."/>
            <person name="Wang L."/>
        </authorList>
    </citation>
    <scope>NUCLEOTIDE SEQUENCE [LARGE SCALE GENOMIC DNA]</scope>
    <source>
        <strain>NG80-2</strain>
    </source>
</reference>
<name>SSPN_GEOTN</name>
<accession>A4IN74</accession>
<evidence type="ECO:0000255" key="1">
    <source>
        <dbReference type="HAMAP-Rule" id="MF_01505"/>
    </source>
</evidence>
<evidence type="ECO:0000256" key="2">
    <source>
        <dbReference type="SAM" id="MobiDB-lite"/>
    </source>
</evidence>
<proteinExistence type="inferred from homology"/>
<sequence length="47" mass="5066">MSNPKRSPNHFAPNHIGTQPRAAGGNKGKQMQDQSGQHAQVIQTKGE</sequence>
<protein>
    <recommendedName>
        <fullName evidence="1">Small, acid-soluble spore protein N</fullName>
        <shortName evidence="1">SASP N</shortName>
    </recommendedName>
</protein>
<keyword id="KW-0749">Sporulation</keyword>
<dbReference type="EMBL" id="CP000557">
    <property type="protein sequence ID" value="ABO66778.1"/>
    <property type="molecule type" value="Genomic_DNA"/>
</dbReference>
<dbReference type="RefSeq" id="WP_011887312.1">
    <property type="nucleotide sequence ID" value="NC_009328.1"/>
</dbReference>
<dbReference type="KEGG" id="gtn:GTNG_1408"/>
<dbReference type="eggNOG" id="ENOG5033HHC">
    <property type="taxonomic scope" value="Bacteria"/>
</dbReference>
<dbReference type="HOGENOM" id="CLU_216714_0_0_9"/>
<dbReference type="Proteomes" id="UP000001578">
    <property type="component" value="Chromosome"/>
</dbReference>
<dbReference type="GO" id="GO:0042601">
    <property type="term" value="C:endospore-forming forespore"/>
    <property type="evidence" value="ECO:0007669"/>
    <property type="project" value="InterPro"/>
</dbReference>
<dbReference type="GO" id="GO:0030436">
    <property type="term" value="P:asexual sporulation"/>
    <property type="evidence" value="ECO:0007669"/>
    <property type="project" value="UniProtKB-UniRule"/>
</dbReference>
<dbReference type="GO" id="GO:0030435">
    <property type="term" value="P:sporulation resulting in formation of a cellular spore"/>
    <property type="evidence" value="ECO:0007669"/>
    <property type="project" value="UniProtKB-KW"/>
</dbReference>
<dbReference type="HAMAP" id="MF_01505">
    <property type="entry name" value="SspN"/>
    <property type="match status" value="1"/>
</dbReference>
<dbReference type="InterPro" id="IPR012612">
    <property type="entry name" value="SASP_SspN"/>
</dbReference>
<dbReference type="NCBIfam" id="NF006904">
    <property type="entry name" value="PRK09398.1"/>
    <property type="match status" value="1"/>
</dbReference>
<dbReference type="Pfam" id="PF08177">
    <property type="entry name" value="SspN"/>
    <property type="match status" value="1"/>
</dbReference>
<organism>
    <name type="scientific">Geobacillus thermodenitrificans (strain NG80-2)</name>
    <dbReference type="NCBI Taxonomy" id="420246"/>
    <lineage>
        <taxon>Bacteria</taxon>
        <taxon>Bacillati</taxon>
        <taxon>Bacillota</taxon>
        <taxon>Bacilli</taxon>
        <taxon>Bacillales</taxon>
        <taxon>Anoxybacillaceae</taxon>
        <taxon>Geobacillus</taxon>
    </lineage>
</organism>
<gene>
    <name evidence="1" type="primary">sspN</name>
    <name type="ordered locus">GTNG_1408</name>
</gene>
<feature type="chain" id="PRO_1000024482" description="Small, acid-soluble spore protein N">
    <location>
        <begin position="1"/>
        <end position="47"/>
    </location>
</feature>
<feature type="region of interest" description="Disordered" evidence="2">
    <location>
        <begin position="1"/>
        <end position="47"/>
    </location>
</feature>
<feature type="compositionally biased region" description="Polar residues" evidence="2">
    <location>
        <begin position="29"/>
        <end position="47"/>
    </location>
</feature>